<gene>
    <name evidence="1" type="primary">tsf</name>
    <name type="ordered locus">AZOSEA34150</name>
    <name type="ORF">ebA5987</name>
</gene>
<reference key="1">
    <citation type="journal article" date="2005" name="Arch. Microbiol.">
        <title>The genome sequence of an anaerobic aromatic-degrading denitrifying bacterium, strain EbN1.</title>
        <authorList>
            <person name="Rabus R."/>
            <person name="Kube M."/>
            <person name="Heider J."/>
            <person name="Beck A."/>
            <person name="Heitmann K."/>
            <person name="Widdel F."/>
            <person name="Reinhardt R."/>
        </authorList>
    </citation>
    <scope>NUCLEOTIDE SEQUENCE [LARGE SCALE GENOMIC DNA]</scope>
    <source>
        <strain>DSM 19018 / LMG 30748 / EbN1</strain>
    </source>
</reference>
<organism>
    <name type="scientific">Aromatoleum aromaticum (strain DSM 19018 / LMG 30748 / EbN1)</name>
    <name type="common">Azoarcus sp. (strain EbN1)</name>
    <dbReference type="NCBI Taxonomy" id="76114"/>
    <lineage>
        <taxon>Bacteria</taxon>
        <taxon>Pseudomonadati</taxon>
        <taxon>Pseudomonadota</taxon>
        <taxon>Betaproteobacteria</taxon>
        <taxon>Rhodocyclales</taxon>
        <taxon>Rhodocyclaceae</taxon>
        <taxon>Aromatoleum</taxon>
    </lineage>
</organism>
<dbReference type="EMBL" id="CR555306">
    <property type="protein sequence ID" value="CAI09540.1"/>
    <property type="molecule type" value="Genomic_DNA"/>
</dbReference>
<dbReference type="RefSeq" id="WP_011239200.1">
    <property type="nucleotide sequence ID" value="NC_006513.1"/>
</dbReference>
<dbReference type="SMR" id="Q5NZH4"/>
<dbReference type="STRING" id="76114.ebA5987"/>
<dbReference type="KEGG" id="eba:ebA5987"/>
<dbReference type="eggNOG" id="COG0264">
    <property type="taxonomic scope" value="Bacteria"/>
</dbReference>
<dbReference type="HOGENOM" id="CLU_047155_0_2_4"/>
<dbReference type="OrthoDB" id="9808348at2"/>
<dbReference type="Proteomes" id="UP000006552">
    <property type="component" value="Chromosome"/>
</dbReference>
<dbReference type="GO" id="GO:0005737">
    <property type="term" value="C:cytoplasm"/>
    <property type="evidence" value="ECO:0007669"/>
    <property type="project" value="UniProtKB-SubCell"/>
</dbReference>
<dbReference type="GO" id="GO:0003746">
    <property type="term" value="F:translation elongation factor activity"/>
    <property type="evidence" value="ECO:0007669"/>
    <property type="project" value="UniProtKB-UniRule"/>
</dbReference>
<dbReference type="CDD" id="cd14275">
    <property type="entry name" value="UBA_EF-Ts"/>
    <property type="match status" value="1"/>
</dbReference>
<dbReference type="FunFam" id="1.10.8.10:FF:000001">
    <property type="entry name" value="Elongation factor Ts"/>
    <property type="match status" value="1"/>
</dbReference>
<dbReference type="Gene3D" id="1.10.286.20">
    <property type="match status" value="1"/>
</dbReference>
<dbReference type="Gene3D" id="1.10.8.10">
    <property type="entry name" value="DNA helicase RuvA subunit, C-terminal domain"/>
    <property type="match status" value="1"/>
</dbReference>
<dbReference type="Gene3D" id="3.30.479.20">
    <property type="entry name" value="Elongation factor Ts, dimerisation domain"/>
    <property type="match status" value="2"/>
</dbReference>
<dbReference type="HAMAP" id="MF_00050">
    <property type="entry name" value="EF_Ts"/>
    <property type="match status" value="1"/>
</dbReference>
<dbReference type="InterPro" id="IPR036402">
    <property type="entry name" value="EF-Ts_dimer_sf"/>
</dbReference>
<dbReference type="InterPro" id="IPR001816">
    <property type="entry name" value="Transl_elong_EFTs/EF1B"/>
</dbReference>
<dbReference type="InterPro" id="IPR014039">
    <property type="entry name" value="Transl_elong_EFTs/EF1B_dimer"/>
</dbReference>
<dbReference type="InterPro" id="IPR018101">
    <property type="entry name" value="Transl_elong_Ts_CS"/>
</dbReference>
<dbReference type="InterPro" id="IPR009060">
    <property type="entry name" value="UBA-like_sf"/>
</dbReference>
<dbReference type="NCBIfam" id="TIGR00116">
    <property type="entry name" value="tsf"/>
    <property type="match status" value="1"/>
</dbReference>
<dbReference type="PANTHER" id="PTHR11741">
    <property type="entry name" value="ELONGATION FACTOR TS"/>
    <property type="match status" value="1"/>
</dbReference>
<dbReference type="PANTHER" id="PTHR11741:SF0">
    <property type="entry name" value="ELONGATION FACTOR TS, MITOCHONDRIAL"/>
    <property type="match status" value="1"/>
</dbReference>
<dbReference type="Pfam" id="PF00889">
    <property type="entry name" value="EF_TS"/>
    <property type="match status" value="1"/>
</dbReference>
<dbReference type="SUPFAM" id="SSF54713">
    <property type="entry name" value="Elongation factor Ts (EF-Ts), dimerisation domain"/>
    <property type="match status" value="2"/>
</dbReference>
<dbReference type="SUPFAM" id="SSF46934">
    <property type="entry name" value="UBA-like"/>
    <property type="match status" value="1"/>
</dbReference>
<dbReference type="PROSITE" id="PS01127">
    <property type="entry name" value="EF_TS_2"/>
    <property type="match status" value="1"/>
</dbReference>
<feature type="chain" id="PRO_0000161067" description="Elongation factor Ts">
    <location>
        <begin position="1"/>
        <end position="296"/>
    </location>
</feature>
<feature type="region of interest" description="Involved in Mg(2+) ion dislocation from EF-Tu" evidence="1">
    <location>
        <begin position="82"/>
        <end position="85"/>
    </location>
</feature>
<keyword id="KW-0963">Cytoplasm</keyword>
<keyword id="KW-0251">Elongation factor</keyword>
<keyword id="KW-0648">Protein biosynthesis</keyword>
<keyword id="KW-1185">Reference proteome</keyword>
<accession>Q5NZH4</accession>
<comment type="function">
    <text evidence="1">Associates with the EF-Tu.GDP complex and induces the exchange of GDP to GTP. It remains bound to the aminoacyl-tRNA.EF-Tu.GTP complex up to the GTP hydrolysis stage on the ribosome.</text>
</comment>
<comment type="subcellular location">
    <subcellularLocation>
        <location evidence="1">Cytoplasm</location>
    </subcellularLocation>
</comment>
<comment type="similarity">
    <text evidence="1">Belongs to the EF-Ts family.</text>
</comment>
<sequence length="296" mass="31116">MAEITASMVKELREKTDAPMMECKKALTEAAGDLAKAEEILRVKLGSKASKAASRVTAEGIVATWQSADGKLAALVEVNCETDFVAKNDDFLAFSAAVAELVATRNPADVAAIGALDLGGQTVEQVRTALVGKIGENITIRRFTRIDAQGAVASYIHAGAKIGVLVDLVGGSEALGKDLAMHIAAAKPKALMASEIPAELIDTERRIAIEKAREAGKPEAMLDRIADGTVQKFLKEVTLLGQPFVKDDKLTIEALLKSRNASVASFVLYIVGEGIEKKVSDFAAEVAAQAAAAAQK</sequence>
<proteinExistence type="inferred from homology"/>
<name>EFTS_AROAE</name>
<protein>
    <recommendedName>
        <fullName evidence="1">Elongation factor Ts</fullName>
        <shortName evidence="1">EF-Ts</shortName>
    </recommendedName>
</protein>
<evidence type="ECO:0000255" key="1">
    <source>
        <dbReference type="HAMAP-Rule" id="MF_00050"/>
    </source>
</evidence>